<name>CVFB_STAAB</name>
<evidence type="ECO:0000250" key="1"/>
<evidence type="ECO:0000305" key="2"/>
<accession>Q2YXX8</accession>
<reference key="1">
    <citation type="journal article" date="2007" name="PLoS ONE">
        <title>Molecular correlates of host specialization in Staphylococcus aureus.</title>
        <authorList>
            <person name="Herron-Olson L."/>
            <person name="Fitzgerald J.R."/>
            <person name="Musser J.M."/>
            <person name="Kapur V."/>
        </authorList>
    </citation>
    <scope>NUCLEOTIDE SEQUENCE [LARGE SCALE GENOMIC DNA]</scope>
    <source>
        <strain>bovine RF122 / ET3-1</strain>
    </source>
</reference>
<feature type="chain" id="PRO_0000282289" description="Conserved virulence factor B">
    <location>
        <begin position="1"/>
        <end position="300"/>
    </location>
</feature>
<protein>
    <recommendedName>
        <fullName>Conserved virulence factor B</fullName>
    </recommendedName>
</protein>
<sequence length="300" mass="34185">MALDKDIVGSIEFLEVVGLQGSTYLLKGPNGENVKLNQSEMNDDDELEVGEEYSFFIYPNRSGELFATQNMPDITKDKYDFAKVLKTDRDGARIDVGLPREVLVPWEDLPKVKSLWPQPGDHLLVTLRIDRENHMYGRLASESVVENMFTPVHDDNLKNEVIEAKPYRVLRIGSFLLSESGYKIFVHESERKAEPRLGESVQVRIIGHNDKGELNGSFLPLAHERLDDDGQVIFDLLVEYDGELPFWDKSSPEAIKEVFNMSKGSFKRAIGHLYKQKIINIETGKITLTKKGWSRIDSKE</sequence>
<gene>
    <name type="primary">cvfB</name>
    <name type="ordered locus">SAB1246c</name>
</gene>
<proteinExistence type="inferred from homology"/>
<comment type="function">
    <text evidence="1">Contributes to the expression of virulence factors and to pathogenicity. Involved in the production of hemolysin, DNase, protease and protein A (By similarity).</text>
</comment>
<comment type="similarity">
    <text evidence="2">Belongs to the CvfB family.</text>
</comment>
<organism>
    <name type="scientific">Staphylococcus aureus (strain bovine RF122 / ET3-1)</name>
    <dbReference type="NCBI Taxonomy" id="273036"/>
    <lineage>
        <taxon>Bacteria</taxon>
        <taxon>Bacillati</taxon>
        <taxon>Bacillota</taxon>
        <taxon>Bacilli</taxon>
        <taxon>Bacillales</taxon>
        <taxon>Staphylococcaceae</taxon>
        <taxon>Staphylococcus</taxon>
    </lineage>
</organism>
<keyword id="KW-0843">Virulence</keyword>
<dbReference type="EMBL" id="AJ938182">
    <property type="protein sequence ID" value="CAI80935.1"/>
    <property type="molecule type" value="Genomic_DNA"/>
</dbReference>
<dbReference type="RefSeq" id="WP_001162352.1">
    <property type="nucleotide sequence ID" value="NC_007622.1"/>
</dbReference>
<dbReference type="SMR" id="Q2YXX8"/>
<dbReference type="GeneID" id="66839583"/>
<dbReference type="KEGG" id="sab:SAB1246c"/>
<dbReference type="HOGENOM" id="CLU_064885_0_0_9"/>
<dbReference type="Gene3D" id="2.40.50.140">
    <property type="entry name" value="Nucleic acid-binding proteins"/>
    <property type="match status" value="2"/>
</dbReference>
<dbReference type="Gene3D" id="1.10.10.10">
    <property type="entry name" value="Winged helix-like DNA-binding domain superfamily/Winged helix DNA-binding domain"/>
    <property type="match status" value="1"/>
</dbReference>
<dbReference type="InterPro" id="IPR014464">
    <property type="entry name" value="CvfB_fam"/>
</dbReference>
<dbReference type="InterPro" id="IPR048588">
    <property type="entry name" value="CvfB_S1_2nd"/>
</dbReference>
<dbReference type="InterPro" id="IPR048587">
    <property type="entry name" value="CvfB_S1_3rd"/>
</dbReference>
<dbReference type="InterPro" id="IPR039566">
    <property type="entry name" value="CvfB_S1_st"/>
</dbReference>
<dbReference type="InterPro" id="IPR040764">
    <property type="entry name" value="CvfB_WH"/>
</dbReference>
<dbReference type="InterPro" id="IPR012340">
    <property type="entry name" value="NA-bd_OB-fold"/>
</dbReference>
<dbReference type="InterPro" id="IPR036388">
    <property type="entry name" value="WH-like_DNA-bd_sf"/>
</dbReference>
<dbReference type="PANTHER" id="PTHR37296">
    <property type="entry name" value="CONSERVED VIRULENCE FACTOR B"/>
    <property type="match status" value="1"/>
</dbReference>
<dbReference type="PANTHER" id="PTHR37296:SF1">
    <property type="entry name" value="CONSERVED VIRULENCE FACTOR B"/>
    <property type="match status" value="1"/>
</dbReference>
<dbReference type="Pfam" id="PF21191">
    <property type="entry name" value="CvfB_1st"/>
    <property type="match status" value="1"/>
</dbReference>
<dbReference type="Pfam" id="PF21543">
    <property type="entry name" value="CvfB_2nd"/>
    <property type="match status" value="1"/>
</dbReference>
<dbReference type="Pfam" id="PF17783">
    <property type="entry name" value="CvfB_WH"/>
    <property type="match status" value="1"/>
</dbReference>
<dbReference type="Pfam" id="PF13509">
    <property type="entry name" value="S1_2"/>
    <property type="match status" value="1"/>
</dbReference>
<dbReference type="PIRSF" id="PIRSF012524">
    <property type="entry name" value="YitL_S1"/>
    <property type="match status" value="1"/>
</dbReference>